<accession>A6Q1C1</accession>
<comment type="function">
    <text evidence="1">Cleaves peptides in various proteins in a process that requires ATP hydrolysis. Has a chymotrypsin-like activity. Plays a major role in the degradation of misfolded proteins.</text>
</comment>
<comment type="catalytic activity">
    <reaction evidence="1">
        <text>Hydrolysis of proteins to small peptides in the presence of ATP and magnesium. alpha-casein is the usual test substrate. In the absence of ATP, only oligopeptides shorter than five residues are hydrolyzed (such as succinyl-Leu-Tyr-|-NHMec, and Leu-Tyr-Leu-|-Tyr-Trp, in which cleavage of the -Tyr-|-Leu- and -Tyr-|-Trp bonds also occurs).</text>
        <dbReference type="EC" id="3.4.21.92"/>
    </reaction>
</comment>
<comment type="subunit">
    <text evidence="1">Fourteen ClpP subunits assemble into 2 heptameric rings which stack back to back to give a disk-like structure with a central cavity, resembling the structure of eukaryotic proteasomes.</text>
</comment>
<comment type="subcellular location">
    <subcellularLocation>
        <location evidence="1">Cytoplasm</location>
    </subcellularLocation>
</comment>
<comment type="similarity">
    <text evidence="1">Belongs to the peptidase S14 family.</text>
</comment>
<dbReference type="EC" id="3.4.21.92" evidence="1"/>
<dbReference type="EMBL" id="AP009178">
    <property type="protein sequence ID" value="BAF69280.1"/>
    <property type="molecule type" value="Genomic_DNA"/>
</dbReference>
<dbReference type="RefSeq" id="WP_012081543.1">
    <property type="nucleotide sequence ID" value="NC_009662.1"/>
</dbReference>
<dbReference type="SMR" id="A6Q1C1"/>
<dbReference type="FunCoup" id="A6Q1C1">
    <property type="interactions" value="404"/>
</dbReference>
<dbReference type="STRING" id="387092.NIS_0165"/>
<dbReference type="MEROPS" id="S14.001"/>
<dbReference type="KEGG" id="nis:NIS_0165"/>
<dbReference type="eggNOG" id="COG0740">
    <property type="taxonomic scope" value="Bacteria"/>
</dbReference>
<dbReference type="HOGENOM" id="CLU_058707_3_2_7"/>
<dbReference type="InParanoid" id="A6Q1C1"/>
<dbReference type="OrthoDB" id="9802800at2"/>
<dbReference type="Proteomes" id="UP000001118">
    <property type="component" value="Chromosome"/>
</dbReference>
<dbReference type="GO" id="GO:0005737">
    <property type="term" value="C:cytoplasm"/>
    <property type="evidence" value="ECO:0007669"/>
    <property type="project" value="UniProtKB-SubCell"/>
</dbReference>
<dbReference type="GO" id="GO:0009368">
    <property type="term" value="C:endopeptidase Clp complex"/>
    <property type="evidence" value="ECO:0007669"/>
    <property type="project" value="TreeGrafter"/>
</dbReference>
<dbReference type="GO" id="GO:0004176">
    <property type="term" value="F:ATP-dependent peptidase activity"/>
    <property type="evidence" value="ECO:0007669"/>
    <property type="project" value="InterPro"/>
</dbReference>
<dbReference type="GO" id="GO:0051117">
    <property type="term" value="F:ATPase binding"/>
    <property type="evidence" value="ECO:0007669"/>
    <property type="project" value="TreeGrafter"/>
</dbReference>
<dbReference type="GO" id="GO:0004252">
    <property type="term" value="F:serine-type endopeptidase activity"/>
    <property type="evidence" value="ECO:0007669"/>
    <property type="project" value="UniProtKB-UniRule"/>
</dbReference>
<dbReference type="GO" id="GO:0006515">
    <property type="term" value="P:protein quality control for misfolded or incompletely synthesized proteins"/>
    <property type="evidence" value="ECO:0007669"/>
    <property type="project" value="TreeGrafter"/>
</dbReference>
<dbReference type="CDD" id="cd07017">
    <property type="entry name" value="S14_ClpP_2"/>
    <property type="match status" value="1"/>
</dbReference>
<dbReference type="FunFam" id="3.90.226.10:FF:000001">
    <property type="entry name" value="ATP-dependent Clp protease proteolytic subunit"/>
    <property type="match status" value="1"/>
</dbReference>
<dbReference type="Gene3D" id="3.90.226.10">
    <property type="entry name" value="2-enoyl-CoA Hydratase, Chain A, domain 1"/>
    <property type="match status" value="1"/>
</dbReference>
<dbReference type="HAMAP" id="MF_00444">
    <property type="entry name" value="ClpP"/>
    <property type="match status" value="1"/>
</dbReference>
<dbReference type="InterPro" id="IPR001907">
    <property type="entry name" value="ClpP"/>
</dbReference>
<dbReference type="InterPro" id="IPR029045">
    <property type="entry name" value="ClpP/crotonase-like_dom_sf"/>
</dbReference>
<dbReference type="InterPro" id="IPR023562">
    <property type="entry name" value="ClpP/TepA"/>
</dbReference>
<dbReference type="InterPro" id="IPR033135">
    <property type="entry name" value="ClpP_His_AS"/>
</dbReference>
<dbReference type="InterPro" id="IPR018215">
    <property type="entry name" value="ClpP_Ser_AS"/>
</dbReference>
<dbReference type="NCBIfam" id="TIGR00493">
    <property type="entry name" value="clpP"/>
    <property type="match status" value="1"/>
</dbReference>
<dbReference type="NCBIfam" id="NF001368">
    <property type="entry name" value="PRK00277.1"/>
    <property type="match status" value="1"/>
</dbReference>
<dbReference type="NCBIfam" id="NF009205">
    <property type="entry name" value="PRK12553.1"/>
    <property type="match status" value="1"/>
</dbReference>
<dbReference type="PANTHER" id="PTHR10381">
    <property type="entry name" value="ATP-DEPENDENT CLP PROTEASE PROTEOLYTIC SUBUNIT"/>
    <property type="match status" value="1"/>
</dbReference>
<dbReference type="PANTHER" id="PTHR10381:SF70">
    <property type="entry name" value="ATP-DEPENDENT CLP PROTEASE PROTEOLYTIC SUBUNIT"/>
    <property type="match status" value="1"/>
</dbReference>
<dbReference type="Pfam" id="PF00574">
    <property type="entry name" value="CLP_protease"/>
    <property type="match status" value="1"/>
</dbReference>
<dbReference type="PRINTS" id="PR00127">
    <property type="entry name" value="CLPPROTEASEP"/>
</dbReference>
<dbReference type="SUPFAM" id="SSF52096">
    <property type="entry name" value="ClpP/crotonase"/>
    <property type="match status" value="1"/>
</dbReference>
<dbReference type="PROSITE" id="PS00382">
    <property type="entry name" value="CLP_PROTEASE_HIS"/>
    <property type="match status" value="1"/>
</dbReference>
<dbReference type="PROSITE" id="PS00381">
    <property type="entry name" value="CLP_PROTEASE_SER"/>
    <property type="match status" value="1"/>
</dbReference>
<protein>
    <recommendedName>
        <fullName evidence="1">ATP-dependent Clp protease proteolytic subunit</fullName>
        <ecNumber evidence="1">3.4.21.92</ecNumber>
    </recommendedName>
    <alternativeName>
        <fullName evidence="1">Endopeptidase Clp</fullName>
    </alternativeName>
</protein>
<reference key="1">
    <citation type="journal article" date="2007" name="Proc. Natl. Acad. Sci. U.S.A.">
        <title>Deep-sea vent epsilon-proteobacterial genomes provide insights into emergence of pathogens.</title>
        <authorList>
            <person name="Nakagawa S."/>
            <person name="Takaki Y."/>
            <person name="Shimamura S."/>
            <person name="Reysenbach A.-L."/>
            <person name="Takai K."/>
            <person name="Horikoshi K."/>
        </authorList>
    </citation>
    <scope>NUCLEOTIDE SEQUENCE [LARGE SCALE GENOMIC DNA]</scope>
    <source>
        <strain>SB155-2</strain>
    </source>
</reference>
<organism>
    <name type="scientific">Nitratiruptor sp. (strain SB155-2)</name>
    <dbReference type="NCBI Taxonomy" id="387092"/>
    <lineage>
        <taxon>Bacteria</taxon>
        <taxon>Pseudomonadati</taxon>
        <taxon>Campylobacterota</taxon>
        <taxon>Epsilonproteobacteria</taxon>
        <taxon>Nautiliales</taxon>
        <taxon>Nitratiruptoraceae</taxon>
        <taxon>Nitratiruptor</taxon>
    </lineage>
</organism>
<evidence type="ECO:0000255" key="1">
    <source>
        <dbReference type="HAMAP-Rule" id="MF_00444"/>
    </source>
</evidence>
<keyword id="KW-0963">Cytoplasm</keyword>
<keyword id="KW-0378">Hydrolase</keyword>
<keyword id="KW-0645">Protease</keyword>
<keyword id="KW-1185">Reference proteome</keyword>
<keyword id="KW-0720">Serine protease</keyword>
<gene>
    <name evidence="1" type="primary">clpP</name>
    <name type="ordered locus">NIS_0165</name>
</gene>
<proteinExistence type="inferred from homology"/>
<sequence>MSYYIPYVIERTGRGERSYDIYSRLLKDRIIMLSGEINDAVASSIVAQLLFLEAEDPDKDIYLYINSPGGVITSGMSIYDTMNYIKPDVSTICIGQAASMGAFLLSSGTKGKRYALPHARIMIHQPLGGAQGQATDIEIQAKEILRLKKILNEILAENTGQSVKKIAKDTERDFFMSSEEAKEYGLIDQVLEKSAR</sequence>
<name>CLPP_NITSB</name>
<feature type="chain" id="PRO_1000026109" description="ATP-dependent Clp protease proteolytic subunit">
    <location>
        <begin position="1"/>
        <end position="196"/>
    </location>
</feature>
<feature type="active site" description="Nucleophile" evidence="1">
    <location>
        <position position="99"/>
    </location>
</feature>
<feature type="active site" evidence="1">
    <location>
        <position position="124"/>
    </location>
</feature>